<name>GSA_METBU</name>
<comment type="catalytic activity">
    <reaction evidence="1">
        <text>(S)-4-amino-5-oxopentanoate = 5-aminolevulinate</text>
        <dbReference type="Rhea" id="RHEA:14265"/>
        <dbReference type="ChEBI" id="CHEBI:57501"/>
        <dbReference type="ChEBI" id="CHEBI:356416"/>
        <dbReference type="EC" id="5.4.3.8"/>
    </reaction>
</comment>
<comment type="cofactor">
    <cofactor evidence="1">
        <name>pyridoxal 5'-phosphate</name>
        <dbReference type="ChEBI" id="CHEBI:597326"/>
    </cofactor>
</comment>
<comment type="pathway">
    <text evidence="1">Porphyrin-containing compound metabolism; protoporphyrin-IX biosynthesis; 5-aminolevulinate from L-glutamyl-tRNA(Glu): step 2/2.</text>
</comment>
<comment type="subcellular location">
    <subcellularLocation>
        <location evidence="1">Cytoplasm</location>
    </subcellularLocation>
</comment>
<comment type="similarity">
    <text evidence="1">Belongs to the class-III pyridoxal-phosphate-dependent aminotransferase family. HemL subfamily.</text>
</comment>
<keyword id="KW-0963">Cytoplasm</keyword>
<keyword id="KW-0413">Isomerase</keyword>
<keyword id="KW-0627">Porphyrin biosynthesis</keyword>
<keyword id="KW-0663">Pyridoxal phosphate</keyword>
<protein>
    <recommendedName>
        <fullName evidence="1">Glutamate-1-semialdehyde 2,1-aminomutase</fullName>
        <shortName evidence="1">GSA</shortName>
        <ecNumber evidence="1">5.4.3.8</ecNumber>
    </recommendedName>
    <alternativeName>
        <fullName evidence="1">Glutamate-1-semialdehyde aminotransferase</fullName>
        <shortName evidence="1">GSA-AT</shortName>
    </alternativeName>
</protein>
<feature type="chain" id="PRO_0000382398" description="Glutamate-1-semialdehyde 2,1-aminomutase">
    <location>
        <begin position="1"/>
        <end position="422"/>
    </location>
</feature>
<feature type="modified residue" description="N6-(pyridoxal phosphate)lysine" evidence="1">
    <location>
        <position position="265"/>
    </location>
</feature>
<proteinExistence type="inferred from homology"/>
<organism>
    <name type="scientific">Methanococcoides burtonii (strain DSM 6242 / NBRC 107633 / OCM 468 / ACE-M)</name>
    <dbReference type="NCBI Taxonomy" id="259564"/>
    <lineage>
        <taxon>Archaea</taxon>
        <taxon>Methanobacteriati</taxon>
        <taxon>Methanobacteriota</taxon>
        <taxon>Stenosarchaea group</taxon>
        <taxon>Methanomicrobia</taxon>
        <taxon>Methanosarcinales</taxon>
        <taxon>Methanosarcinaceae</taxon>
        <taxon>Methanococcoides</taxon>
    </lineage>
</organism>
<reference key="1">
    <citation type="journal article" date="2009" name="ISME J.">
        <title>The genome sequence of the psychrophilic archaeon, Methanococcoides burtonii: the role of genome evolution in cold adaptation.</title>
        <authorList>
            <person name="Allen M.A."/>
            <person name="Lauro F.M."/>
            <person name="Williams T.J."/>
            <person name="Burg D."/>
            <person name="Siddiqui K.S."/>
            <person name="De Francisci D."/>
            <person name="Chong K.W."/>
            <person name="Pilak O."/>
            <person name="Chew H.H."/>
            <person name="De Maere M.Z."/>
            <person name="Ting L."/>
            <person name="Katrib M."/>
            <person name="Ng C."/>
            <person name="Sowers K.R."/>
            <person name="Galperin M.Y."/>
            <person name="Anderson I.J."/>
            <person name="Ivanova N."/>
            <person name="Dalin E."/>
            <person name="Martinez M."/>
            <person name="Lapidus A."/>
            <person name="Hauser L."/>
            <person name="Land M."/>
            <person name="Thomas T."/>
            <person name="Cavicchioli R."/>
        </authorList>
    </citation>
    <scope>NUCLEOTIDE SEQUENCE [LARGE SCALE GENOMIC DNA]</scope>
    <source>
        <strain>DSM 6242 / NBRC 107633 / OCM 468 / ACE-M</strain>
    </source>
</reference>
<dbReference type="EC" id="5.4.3.8" evidence="1"/>
<dbReference type="EMBL" id="CP000300">
    <property type="protein sequence ID" value="ABE52149.1"/>
    <property type="molecule type" value="Genomic_DNA"/>
</dbReference>
<dbReference type="RefSeq" id="WP_011499295.1">
    <property type="nucleotide sequence ID" value="NC_007955.1"/>
</dbReference>
<dbReference type="SMR" id="Q12WM7"/>
<dbReference type="STRING" id="259564.Mbur_1227"/>
<dbReference type="GeneID" id="3998551"/>
<dbReference type="KEGG" id="mbu:Mbur_1227"/>
<dbReference type="HOGENOM" id="CLU_016922_1_5_2"/>
<dbReference type="OrthoDB" id="6524at2157"/>
<dbReference type="UniPathway" id="UPA00251">
    <property type="reaction ID" value="UER00317"/>
</dbReference>
<dbReference type="Proteomes" id="UP000001979">
    <property type="component" value="Chromosome"/>
</dbReference>
<dbReference type="GO" id="GO:0005737">
    <property type="term" value="C:cytoplasm"/>
    <property type="evidence" value="ECO:0007669"/>
    <property type="project" value="UniProtKB-SubCell"/>
</dbReference>
<dbReference type="GO" id="GO:0042286">
    <property type="term" value="F:glutamate-1-semialdehyde 2,1-aminomutase activity"/>
    <property type="evidence" value="ECO:0007669"/>
    <property type="project" value="UniProtKB-UniRule"/>
</dbReference>
<dbReference type="GO" id="GO:0030170">
    <property type="term" value="F:pyridoxal phosphate binding"/>
    <property type="evidence" value="ECO:0007669"/>
    <property type="project" value="InterPro"/>
</dbReference>
<dbReference type="GO" id="GO:0008483">
    <property type="term" value="F:transaminase activity"/>
    <property type="evidence" value="ECO:0007669"/>
    <property type="project" value="InterPro"/>
</dbReference>
<dbReference type="GO" id="GO:0006782">
    <property type="term" value="P:protoporphyrinogen IX biosynthetic process"/>
    <property type="evidence" value="ECO:0007669"/>
    <property type="project" value="UniProtKB-UniRule"/>
</dbReference>
<dbReference type="CDD" id="cd00610">
    <property type="entry name" value="OAT_like"/>
    <property type="match status" value="1"/>
</dbReference>
<dbReference type="FunFam" id="3.40.640.10:FF:000021">
    <property type="entry name" value="Glutamate-1-semialdehyde 2,1-aminomutase"/>
    <property type="match status" value="1"/>
</dbReference>
<dbReference type="Gene3D" id="3.90.1150.10">
    <property type="entry name" value="Aspartate Aminotransferase, domain 1"/>
    <property type="match status" value="1"/>
</dbReference>
<dbReference type="Gene3D" id="3.40.640.10">
    <property type="entry name" value="Type I PLP-dependent aspartate aminotransferase-like (Major domain)"/>
    <property type="match status" value="1"/>
</dbReference>
<dbReference type="HAMAP" id="MF_00375">
    <property type="entry name" value="HemL_aminotrans_3"/>
    <property type="match status" value="1"/>
</dbReference>
<dbReference type="InterPro" id="IPR004639">
    <property type="entry name" value="4pyrrol_synth_GluAld_NH2Trfase"/>
</dbReference>
<dbReference type="InterPro" id="IPR005814">
    <property type="entry name" value="Aminotrans_3"/>
</dbReference>
<dbReference type="InterPro" id="IPR049704">
    <property type="entry name" value="Aminotrans_3_PPA_site"/>
</dbReference>
<dbReference type="InterPro" id="IPR015424">
    <property type="entry name" value="PyrdxlP-dep_Trfase"/>
</dbReference>
<dbReference type="InterPro" id="IPR015421">
    <property type="entry name" value="PyrdxlP-dep_Trfase_major"/>
</dbReference>
<dbReference type="InterPro" id="IPR015422">
    <property type="entry name" value="PyrdxlP-dep_Trfase_small"/>
</dbReference>
<dbReference type="NCBIfam" id="TIGR00713">
    <property type="entry name" value="hemL"/>
    <property type="match status" value="1"/>
</dbReference>
<dbReference type="NCBIfam" id="NF000818">
    <property type="entry name" value="PRK00062.1"/>
    <property type="match status" value="1"/>
</dbReference>
<dbReference type="PANTHER" id="PTHR43713">
    <property type="entry name" value="GLUTAMATE-1-SEMIALDEHYDE 2,1-AMINOMUTASE"/>
    <property type="match status" value="1"/>
</dbReference>
<dbReference type="PANTHER" id="PTHR43713:SF3">
    <property type="entry name" value="GLUTAMATE-1-SEMIALDEHYDE 2,1-AMINOMUTASE 1, CHLOROPLASTIC-RELATED"/>
    <property type="match status" value="1"/>
</dbReference>
<dbReference type="Pfam" id="PF00202">
    <property type="entry name" value="Aminotran_3"/>
    <property type="match status" value="1"/>
</dbReference>
<dbReference type="SUPFAM" id="SSF53383">
    <property type="entry name" value="PLP-dependent transferases"/>
    <property type="match status" value="1"/>
</dbReference>
<dbReference type="PROSITE" id="PS00600">
    <property type="entry name" value="AA_TRANSFER_CLASS_3"/>
    <property type="match status" value="1"/>
</dbReference>
<gene>
    <name evidence="1" type="primary">hemL</name>
    <name type="ordered locus">Mbur_1227</name>
</gene>
<evidence type="ECO:0000255" key="1">
    <source>
        <dbReference type="HAMAP-Rule" id="MF_00375"/>
    </source>
</evidence>
<sequence>MVTLDKSKDLFDKARKILPGGVSSPVRAIKPYPFYTESANGCRIKDVDGNEYIDYCLAYGPNILGHANPVIKQAIIDQLDKGWLYGTPTGLEVTLGEKIASLYPSIDMLRFVSTGTEATMSALRAARGFTCKNKFVKIEGGFHGAHDAVLVKAGSGATTHGKPDSLGIPEDFTKNTLQVAYNDIEAMTEVIESNQDDMAAVIMEPVLGNIGPILPEGDYLKEVRKVTEENDVVLIFDEVITGFRLAMGGAQEYFGVTPDMTTLGKIVGGGLPIGVFGGKREILEMISPSGSVYQAGTFSGSPASVAAGIAAVDVLEKEKVHEKLEATGNMLRAGLNDIIADKRLDFHVGGIASMFKVFFGDKPLNYQDVLKCDKEGYLQFFHDMLDSNVFLPPSQFETNFLSTAHTEADLETTLEAYAVNLK</sequence>
<accession>Q12WM7</accession>